<reference key="1">
    <citation type="journal article" date="2005" name="DNA Res.">
        <title>Complete genome sequence of the facultative anaerobic magnetotactic bacterium Magnetospirillum sp. strain AMB-1.</title>
        <authorList>
            <person name="Matsunaga T."/>
            <person name="Okamura Y."/>
            <person name="Fukuda Y."/>
            <person name="Wahyudi A.T."/>
            <person name="Murase Y."/>
            <person name="Takeyama H."/>
        </authorList>
    </citation>
    <scope>NUCLEOTIDE SEQUENCE [LARGE SCALE GENOMIC DNA]</scope>
    <source>
        <strain>ATCC 700264 / AMB-1</strain>
    </source>
</reference>
<comment type="function">
    <text evidence="1">Protein S19 forms a complex with S13 that binds strongly to the 16S ribosomal RNA.</text>
</comment>
<comment type="similarity">
    <text evidence="1">Belongs to the universal ribosomal protein uS19 family.</text>
</comment>
<dbReference type="EMBL" id="AP007255">
    <property type="protein sequence ID" value="BAE51930.1"/>
    <property type="molecule type" value="Genomic_DNA"/>
</dbReference>
<dbReference type="RefSeq" id="WP_008615453.1">
    <property type="nucleotide sequence ID" value="NC_007626.1"/>
</dbReference>
<dbReference type="SMR" id="Q2W2J5"/>
<dbReference type="STRING" id="342108.amb3126"/>
<dbReference type="KEGG" id="mag:amb3126"/>
<dbReference type="HOGENOM" id="CLU_144911_0_1_5"/>
<dbReference type="OrthoDB" id="9797833at2"/>
<dbReference type="Proteomes" id="UP000007058">
    <property type="component" value="Chromosome"/>
</dbReference>
<dbReference type="GO" id="GO:0005737">
    <property type="term" value="C:cytoplasm"/>
    <property type="evidence" value="ECO:0007669"/>
    <property type="project" value="UniProtKB-ARBA"/>
</dbReference>
<dbReference type="GO" id="GO:0015935">
    <property type="term" value="C:small ribosomal subunit"/>
    <property type="evidence" value="ECO:0007669"/>
    <property type="project" value="InterPro"/>
</dbReference>
<dbReference type="GO" id="GO:0019843">
    <property type="term" value="F:rRNA binding"/>
    <property type="evidence" value="ECO:0007669"/>
    <property type="project" value="UniProtKB-UniRule"/>
</dbReference>
<dbReference type="GO" id="GO:0003735">
    <property type="term" value="F:structural constituent of ribosome"/>
    <property type="evidence" value="ECO:0007669"/>
    <property type="project" value="InterPro"/>
</dbReference>
<dbReference type="GO" id="GO:0000028">
    <property type="term" value="P:ribosomal small subunit assembly"/>
    <property type="evidence" value="ECO:0007669"/>
    <property type="project" value="TreeGrafter"/>
</dbReference>
<dbReference type="GO" id="GO:0006412">
    <property type="term" value="P:translation"/>
    <property type="evidence" value="ECO:0007669"/>
    <property type="project" value="UniProtKB-UniRule"/>
</dbReference>
<dbReference type="FunFam" id="3.30.860.10:FF:000001">
    <property type="entry name" value="30S ribosomal protein S19"/>
    <property type="match status" value="1"/>
</dbReference>
<dbReference type="Gene3D" id="3.30.860.10">
    <property type="entry name" value="30s Ribosomal Protein S19, Chain A"/>
    <property type="match status" value="1"/>
</dbReference>
<dbReference type="HAMAP" id="MF_00531">
    <property type="entry name" value="Ribosomal_uS19"/>
    <property type="match status" value="1"/>
</dbReference>
<dbReference type="InterPro" id="IPR002222">
    <property type="entry name" value="Ribosomal_uS19"/>
</dbReference>
<dbReference type="InterPro" id="IPR005732">
    <property type="entry name" value="Ribosomal_uS19_bac-type"/>
</dbReference>
<dbReference type="InterPro" id="IPR020934">
    <property type="entry name" value="Ribosomal_uS19_CS"/>
</dbReference>
<dbReference type="InterPro" id="IPR023575">
    <property type="entry name" value="Ribosomal_uS19_SF"/>
</dbReference>
<dbReference type="NCBIfam" id="TIGR01050">
    <property type="entry name" value="rpsS_bact"/>
    <property type="match status" value="1"/>
</dbReference>
<dbReference type="PANTHER" id="PTHR11880">
    <property type="entry name" value="RIBOSOMAL PROTEIN S19P FAMILY MEMBER"/>
    <property type="match status" value="1"/>
</dbReference>
<dbReference type="PANTHER" id="PTHR11880:SF8">
    <property type="entry name" value="SMALL RIBOSOMAL SUBUNIT PROTEIN US19M"/>
    <property type="match status" value="1"/>
</dbReference>
<dbReference type="Pfam" id="PF00203">
    <property type="entry name" value="Ribosomal_S19"/>
    <property type="match status" value="1"/>
</dbReference>
<dbReference type="PIRSF" id="PIRSF002144">
    <property type="entry name" value="Ribosomal_S19"/>
    <property type="match status" value="1"/>
</dbReference>
<dbReference type="PRINTS" id="PR00975">
    <property type="entry name" value="RIBOSOMALS19"/>
</dbReference>
<dbReference type="SUPFAM" id="SSF54570">
    <property type="entry name" value="Ribosomal protein S19"/>
    <property type="match status" value="1"/>
</dbReference>
<dbReference type="PROSITE" id="PS00323">
    <property type="entry name" value="RIBOSOMAL_S19"/>
    <property type="match status" value="1"/>
</dbReference>
<proteinExistence type="inferred from homology"/>
<keyword id="KW-0687">Ribonucleoprotein</keyword>
<keyword id="KW-0689">Ribosomal protein</keyword>
<keyword id="KW-0694">RNA-binding</keyword>
<keyword id="KW-0699">rRNA-binding</keyword>
<organism>
    <name type="scientific">Paramagnetospirillum magneticum (strain ATCC 700264 / AMB-1)</name>
    <name type="common">Magnetospirillum magneticum</name>
    <dbReference type="NCBI Taxonomy" id="342108"/>
    <lineage>
        <taxon>Bacteria</taxon>
        <taxon>Pseudomonadati</taxon>
        <taxon>Pseudomonadota</taxon>
        <taxon>Alphaproteobacteria</taxon>
        <taxon>Rhodospirillales</taxon>
        <taxon>Magnetospirillaceae</taxon>
        <taxon>Paramagnetospirillum</taxon>
    </lineage>
</organism>
<sequence>MARSVWKGPFLDGYMLGKADKARASGRNEVIKIWSRRSTILPQFVGLTFGVYNGQKFIPVLVTENMIGHKFGEFSPTRTFYGHAVDKKAKRK</sequence>
<accession>Q2W2J5</accession>
<name>RS19_PARM1</name>
<protein>
    <recommendedName>
        <fullName evidence="1">Small ribosomal subunit protein uS19</fullName>
    </recommendedName>
    <alternativeName>
        <fullName evidence="2">30S ribosomal protein S19</fullName>
    </alternativeName>
</protein>
<evidence type="ECO:0000255" key="1">
    <source>
        <dbReference type="HAMAP-Rule" id="MF_00531"/>
    </source>
</evidence>
<evidence type="ECO:0000305" key="2"/>
<feature type="chain" id="PRO_0000265378" description="Small ribosomal subunit protein uS19">
    <location>
        <begin position="1"/>
        <end position="92"/>
    </location>
</feature>
<gene>
    <name evidence="1" type="primary">rpsS</name>
    <name type="ordered locus">amb3126</name>
</gene>